<sequence>MAGHSRWHNIKNKKAKADAIKGRMFTKVIKEITIAARLGGGDPEANPRLRIAIEKAKEVNMPMENVERAIKRGTGELEGVNYEEVQYEGYGPGGVAIVVEATTDNRNRTTAEIRHIFSKYGGNLGSSGCVSFSFEDKGIINVPKDKYSEDEIFEKAIEAGAEDVIMDDPEYYEIRTAPSELYKVRENLEKMGVEIAKAELTKIPTTTVQITDEETATKLMKLLDALEDNDDVQKVYANFDIPESILEKLEG</sequence>
<protein>
    <recommendedName>
        <fullName evidence="1">Probable transcriptional regulatory protein SYO3AOP1_0685</fullName>
    </recommendedName>
</protein>
<dbReference type="EMBL" id="CP001080">
    <property type="protein sequence ID" value="ACD66321.1"/>
    <property type="molecule type" value="Genomic_DNA"/>
</dbReference>
<dbReference type="RefSeq" id="WP_012459398.1">
    <property type="nucleotide sequence ID" value="NC_010730.1"/>
</dbReference>
<dbReference type="SMR" id="B2V8P8"/>
<dbReference type="STRING" id="436114.SYO3AOP1_0685"/>
<dbReference type="KEGG" id="sul:SYO3AOP1_0685"/>
<dbReference type="eggNOG" id="COG0217">
    <property type="taxonomic scope" value="Bacteria"/>
</dbReference>
<dbReference type="HOGENOM" id="CLU_062974_2_2_0"/>
<dbReference type="GO" id="GO:0005829">
    <property type="term" value="C:cytosol"/>
    <property type="evidence" value="ECO:0007669"/>
    <property type="project" value="TreeGrafter"/>
</dbReference>
<dbReference type="GO" id="GO:0003677">
    <property type="term" value="F:DNA binding"/>
    <property type="evidence" value="ECO:0007669"/>
    <property type="project" value="UniProtKB-UniRule"/>
</dbReference>
<dbReference type="GO" id="GO:0006355">
    <property type="term" value="P:regulation of DNA-templated transcription"/>
    <property type="evidence" value="ECO:0007669"/>
    <property type="project" value="UniProtKB-UniRule"/>
</dbReference>
<dbReference type="FunFam" id="1.10.10.200:FF:000002">
    <property type="entry name" value="Probable transcriptional regulatory protein CLM62_37755"/>
    <property type="match status" value="1"/>
</dbReference>
<dbReference type="FunFam" id="3.30.70.980:FF:000002">
    <property type="entry name" value="Probable transcriptional regulatory protein YebC"/>
    <property type="match status" value="1"/>
</dbReference>
<dbReference type="Gene3D" id="1.10.10.200">
    <property type="match status" value="1"/>
</dbReference>
<dbReference type="Gene3D" id="3.30.70.980">
    <property type="match status" value="2"/>
</dbReference>
<dbReference type="HAMAP" id="MF_00693">
    <property type="entry name" value="Transcrip_reg_TACO1"/>
    <property type="match status" value="1"/>
</dbReference>
<dbReference type="InterPro" id="IPR017856">
    <property type="entry name" value="Integrase-like_N"/>
</dbReference>
<dbReference type="InterPro" id="IPR048300">
    <property type="entry name" value="TACO1_YebC-like_2nd/3rd_dom"/>
</dbReference>
<dbReference type="InterPro" id="IPR049083">
    <property type="entry name" value="TACO1_YebC_N"/>
</dbReference>
<dbReference type="InterPro" id="IPR002876">
    <property type="entry name" value="Transcrip_reg_TACO1-like"/>
</dbReference>
<dbReference type="InterPro" id="IPR026564">
    <property type="entry name" value="Transcrip_reg_TACO1-like_dom3"/>
</dbReference>
<dbReference type="InterPro" id="IPR029072">
    <property type="entry name" value="YebC-like"/>
</dbReference>
<dbReference type="NCBIfam" id="NF001030">
    <property type="entry name" value="PRK00110.1"/>
    <property type="match status" value="1"/>
</dbReference>
<dbReference type="NCBIfam" id="NF009044">
    <property type="entry name" value="PRK12378.1"/>
    <property type="match status" value="1"/>
</dbReference>
<dbReference type="NCBIfam" id="TIGR01033">
    <property type="entry name" value="YebC/PmpR family DNA-binding transcriptional regulator"/>
    <property type="match status" value="1"/>
</dbReference>
<dbReference type="PANTHER" id="PTHR12532:SF6">
    <property type="entry name" value="TRANSCRIPTIONAL REGULATORY PROTEIN YEBC-RELATED"/>
    <property type="match status" value="1"/>
</dbReference>
<dbReference type="PANTHER" id="PTHR12532">
    <property type="entry name" value="TRANSLATIONAL ACTIVATOR OF CYTOCHROME C OXIDASE 1"/>
    <property type="match status" value="1"/>
</dbReference>
<dbReference type="Pfam" id="PF20772">
    <property type="entry name" value="TACO1_YebC_N"/>
    <property type="match status" value="1"/>
</dbReference>
<dbReference type="Pfam" id="PF01709">
    <property type="entry name" value="Transcrip_reg"/>
    <property type="match status" value="1"/>
</dbReference>
<dbReference type="SUPFAM" id="SSF75625">
    <property type="entry name" value="YebC-like"/>
    <property type="match status" value="1"/>
</dbReference>
<comment type="subcellular location">
    <subcellularLocation>
        <location evidence="1">Cytoplasm</location>
    </subcellularLocation>
</comment>
<comment type="similarity">
    <text evidence="1">Belongs to the TACO1 family.</text>
</comment>
<organism>
    <name type="scientific">Sulfurihydrogenibium sp. (strain YO3AOP1)</name>
    <dbReference type="NCBI Taxonomy" id="436114"/>
    <lineage>
        <taxon>Bacteria</taxon>
        <taxon>Pseudomonadati</taxon>
        <taxon>Aquificota</taxon>
        <taxon>Aquificia</taxon>
        <taxon>Aquificales</taxon>
        <taxon>Hydrogenothermaceae</taxon>
        <taxon>Sulfurihydrogenibium</taxon>
    </lineage>
</organism>
<accession>B2V8P8</accession>
<name>Y685_SULSY</name>
<reference key="1">
    <citation type="journal article" date="2009" name="J. Bacteriol.">
        <title>Complete and draft genome sequences of six members of the Aquificales.</title>
        <authorList>
            <person name="Reysenbach A.-L."/>
            <person name="Hamamura N."/>
            <person name="Podar M."/>
            <person name="Griffiths E."/>
            <person name="Ferreira S."/>
            <person name="Hochstein R."/>
            <person name="Heidelberg J."/>
            <person name="Johnson J."/>
            <person name="Mead D."/>
            <person name="Pohorille A."/>
            <person name="Sarmiento M."/>
            <person name="Schweighofer K."/>
            <person name="Seshadri R."/>
            <person name="Voytek M.A."/>
        </authorList>
    </citation>
    <scope>NUCLEOTIDE SEQUENCE [LARGE SCALE GENOMIC DNA]</scope>
    <source>
        <strain>YO3AOP1</strain>
    </source>
</reference>
<evidence type="ECO:0000255" key="1">
    <source>
        <dbReference type="HAMAP-Rule" id="MF_00693"/>
    </source>
</evidence>
<keyword id="KW-0963">Cytoplasm</keyword>
<keyword id="KW-0238">DNA-binding</keyword>
<keyword id="KW-0804">Transcription</keyword>
<keyword id="KW-0805">Transcription regulation</keyword>
<feature type="chain" id="PRO_1000132244" description="Probable transcriptional regulatory protein SYO3AOP1_0685">
    <location>
        <begin position="1"/>
        <end position="251"/>
    </location>
</feature>
<proteinExistence type="inferred from homology"/>
<gene>
    <name type="ordered locus">SYO3AOP1_0685</name>
</gene>